<proteinExistence type="evidence at protein level"/>
<accession>P28359</accession>
<accession>Q91WU9</accession>
<organism>
    <name type="scientific">Mus musculus</name>
    <name type="common">Mouse</name>
    <dbReference type="NCBI Taxonomy" id="10090"/>
    <lineage>
        <taxon>Eukaryota</taxon>
        <taxon>Metazoa</taxon>
        <taxon>Chordata</taxon>
        <taxon>Craniata</taxon>
        <taxon>Vertebrata</taxon>
        <taxon>Euteleostomi</taxon>
        <taxon>Mammalia</taxon>
        <taxon>Eutheria</taxon>
        <taxon>Euarchontoglires</taxon>
        <taxon>Glires</taxon>
        <taxon>Rodentia</taxon>
        <taxon>Myomorpha</taxon>
        <taxon>Muroidea</taxon>
        <taxon>Muridae</taxon>
        <taxon>Murinae</taxon>
        <taxon>Mus</taxon>
        <taxon>Mus</taxon>
    </lineage>
</organism>
<name>HXD10_MOUSE</name>
<dbReference type="EMBL" id="X62669">
    <property type="protein sequence ID" value="CAA44541.1"/>
    <property type="molecule type" value="Genomic_DNA"/>
</dbReference>
<dbReference type="EMBL" id="BC013463">
    <property type="protein sequence ID" value="AAH13463.1"/>
    <property type="molecule type" value="mRNA"/>
</dbReference>
<dbReference type="EMBL" id="BC048690">
    <property type="protein sequence ID" value="AAH48690.1"/>
    <property type="molecule type" value="mRNA"/>
</dbReference>
<dbReference type="EMBL" id="X14715">
    <property type="protein sequence ID" value="CAB57814.1"/>
    <property type="molecule type" value="Genomic_DNA"/>
</dbReference>
<dbReference type="CCDS" id="CCDS16141.1"/>
<dbReference type="PIR" id="S20879">
    <property type="entry name" value="S20879"/>
</dbReference>
<dbReference type="RefSeq" id="NP_038582.2">
    <property type="nucleotide sequence ID" value="NM_013554.5"/>
</dbReference>
<dbReference type="SMR" id="P28359"/>
<dbReference type="BioGRID" id="200392">
    <property type="interactions" value="11"/>
</dbReference>
<dbReference type="FunCoup" id="P28359">
    <property type="interactions" value="1575"/>
</dbReference>
<dbReference type="IntAct" id="P28359">
    <property type="interactions" value="6"/>
</dbReference>
<dbReference type="STRING" id="10090.ENSMUSP00000062412"/>
<dbReference type="iPTMnet" id="P28359"/>
<dbReference type="PhosphoSitePlus" id="P28359"/>
<dbReference type="jPOST" id="P28359"/>
<dbReference type="PaxDb" id="10090-ENSMUSP00000062412"/>
<dbReference type="ProteomicsDB" id="267026"/>
<dbReference type="Antibodypedia" id="33906">
    <property type="antibodies" value="300 antibodies from 29 providers"/>
</dbReference>
<dbReference type="DNASU" id="15430"/>
<dbReference type="Ensembl" id="ENSMUST00000061745.5">
    <property type="protein sequence ID" value="ENSMUSP00000062412.4"/>
    <property type="gene ID" value="ENSMUSG00000050368.5"/>
</dbReference>
<dbReference type="GeneID" id="15430"/>
<dbReference type="KEGG" id="mmu:15430"/>
<dbReference type="UCSC" id="uc008kdx.3">
    <property type="organism name" value="mouse"/>
</dbReference>
<dbReference type="AGR" id="MGI:96202"/>
<dbReference type="CTD" id="3236"/>
<dbReference type="MGI" id="MGI:96202">
    <property type="gene designation" value="Hoxd10"/>
</dbReference>
<dbReference type="VEuPathDB" id="HostDB:ENSMUSG00000050368"/>
<dbReference type="eggNOG" id="KOG0487">
    <property type="taxonomic scope" value="Eukaryota"/>
</dbReference>
<dbReference type="GeneTree" id="ENSGT00940000158266"/>
<dbReference type="HOGENOM" id="CLU_057871_0_0_1"/>
<dbReference type="InParanoid" id="P28359"/>
<dbReference type="OMA" id="DNWTDPN"/>
<dbReference type="OrthoDB" id="6159439at2759"/>
<dbReference type="PhylomeDB" id="P28359"/>
<dbReference type="TreeFam" id="TF317819"/>
<dbReference type="BioGRID-ORCS" id="15430">
    <property type="hits" value="2 hits in 79 CRISPR screens"/>
</dbReference>
<dbReference type="ChiTaRS" id="Hoxd10">
    <property type="organism name" value="mouse"/>
</dbReference>
<dbReference type="PRO" id="PR:P28359"/>
<dbReference type="Proteomes" id="UP000000589">
    <property type="component" value="Chromosome 2"/>
</dbReference>
<dbReference type="RNAct" id="P28359">
    <property type="molecule type" value="protein"/>
</dbReference>
<dbReference type="Bgee" id="ENSMUSG00000050368">
    <property type="expression patterns" value="Expressed in uterus and 88 other cell types or tissues"/>
</dbReference>
<dbReference type="GO" id="GO:0036464">
    <property type="term" value="C:cytoplasmic ribonucleoprotein granule"/>
    <property type="evidence" value="ECO:0007669"/>
    <property type="project" value="Ensembl"/>
</dbReference>
<dbReference type="GO" id="GO:0005829">
    <property type="term" value="C:cytosol"/>
    <property type="evidence" value="ECO:0007669"/>
    <property type="project" value="Ensembl"/>
</dbReference>
<dbReference type="GO" id="GO:0005654">
    <property type="term" value="C:nucleoplasm"/>
    <property type="evidence" value="ECO:0007669"/>
    <property type="project" value="Ensembl"/>
</dbReference>
<dbReference type="GO" id="GO:0003682">
    <property type="term" value="F:chromatin binding"/>
    <property type="evidence" value="ECO:0000314"/>
    <property type="project" value="MGI"/>
</dbReference>
<dbReference type="GO" id="GO:0003677">
    <property type="term" value="F:DNA binding"/>
    <property type="evidence" value="ECO:0000314"/>
    <property type="project" value="MGI"/>
</dbReference>
<dbReference type="GO" id="GO:0001228">
    <property type="term" value="F:DNA-binding transcription activator activity, RNA polymerase II-specific"/>
    <property type="evidence" value="ECO:0000314"/>
    <property type="project" value="NTNU_SB"/>
</dbReference>
<dbReference type="GO" id="GO:0003700">
    <property type="term" value="F:DNA-binding transcription factor activity"/>
    <property type="evidence" value="ECO:0000314"/>
    <property type="project" value="MGI"/>
</dbReference>
<dbReference type="GO" id="GO:0000977">
    <property type="term" value="F:RNA polymerase II transcription regulatory region sequence-specific DNA binding"/>
    <property type="evidence" value="ECO:0000314"/>
    <property type="project" value="NTNU_SB"/>
</dbReference>
<dbReference type="GO" id="GO:0008344">
    <property type="term" value="P:adult locomotory behavior"/>
    <property type="evidence" value="ECO:0000316"/>
    <property type="project" value="MGI"/>
</dbReference>
<dbReference type="GO" id="GO:0009952">
    <property type="term" value="P:anterior/posterior pattern specification"/>
    <property type="evidence" value="ECO:0000316"/>
    <property type="project" value="MGI"/>
</dbReference>
<dbReference type="GO" id="GO:0030326">
    <property type="term" value="P:embryonic limb morphogenesis"/>
    <property type="evidence" value="ECO:0000316"/>
    <property type="project" value="MGI"/>
</dbReference>
<dbReference type="GO" id="GO:0048704">
    <property type="term" value="P:embryonic skeletal system morphogenesis"/>
    <property type="evidence" value="ECO:0000316"/>
    <property type="project" value="MGI"/>
</dbReference>
<dbReference type="GO" id="GO:0035136">
    <property type="term" value="P:forelimb morphogenesis"/>
    <property type="evidence" value="ECO:0000316"/>
    <property type="project" value="MGI"/>
</dbReference>
<dbReference type="GO" id="GO:0035137">
    <property type="term" value="P:hindlimb morphogenesis"/>
    <property type="evidence" value="ECO:0000316"/>
    <property type="project" value="MGI"/>
</dbReference>
<dbReference type="GO" id="GO:0050905">
    <property type="term" value="P:neuromuscular process"/>
    <property type="evidence" value="ECO:0000316"/>
    <property type="project" value="MGI"/>
</dbReference>
<dbReference type="GO" id="GO:0048935">
    <property type="term" value="P:peripheral nervous system neuron development"/>
    <property type="evidence" value="ECO:0000316"/>
    <property type="project" value="MGI"/>
</dbReference>
<dbReference type="GO" id="GO:0045944">
    <property type="term" value="P:positive regulation of transcription by RNA polymerase II"/>
    <property type="evidence" value="ECO:0000314"/>
    <property type="project" value="NTNU_SB"/>
</dbReference>
<dbReference type="GO" id="GO:0009954">
    <property type="term" value="P:proximal/distal pattern formation"/>
    <property type="evidence" value="ECO:0000316"/>
    <property type="project" value="MGI"/>
</dbReference>
<dbReference type="GO" id="GO:0010468">
    <property type="term" value="P:regulation of gene expression"/>
    <property type="evidence" value="ECO:0000316"/>
    <property type="project" value="MGI"/>
</dbReference>
<dbReference type="GO" id="GO:0007338">
    <property type="term" value="P:single fertilization"/>
    <property type="evidence" value="ECO:0000316"/>
    <property type="project" value="MGI"/>
</dbReference>
<dbReference type="GO" id="GO:0007519">
    <property type="term" value="P:skeletal muscle tissue development"/>
    <property type="evidence" value="ECO:0000316"/>
    <property type="project" value="MGI"/>
</dbReference>
<dbReference type="GO" id="GO:0001501">
    <property type="term" value="P:skeletal system development"/>
    <property type="evidence" value="ECO:0000315"/>
    <property type="project" value="MGI"/>
</dbReference>
<dbReference type="GO" id="GO:0021520">
    <property type="term" value="P:spinal cord motor neuron cell fate specification"/>
    <property type="evidence" value="ECO:0000316"/>
    <property type="project" value="MGI"/>
</dbReference>
<dbReference type="CDD" id="cd00086">
    <property type="entry name" value="homeodomain"/>
    <property type="match status" value="1"/>
</dbReference>
<dbReference type="FunFam" id="1.10.10.60:FF:000018">
    <property type="entry name" value="Homeobox A10"/>
    <property type="match status" value="1"/>
</dbReference>
<dbReference type="Gene3D" id="1.10.10.60">
    <property type="entry name" value="Homeodomain-like"/>
    <property type="match status" value="1"/>
</dbReference>
<dbReference type="InterPro" id="IPR001356">
    <property type="entry name" value="HD"/>
</dbReference>
<dbReference type="InterPro" id="IPR020479">
    <property type="entry name" value="HD_metazoa"/>
</dbReference>
<dbReference type="InterPro" id="IPR017970">
    <property type="entry name" value="Homeobox_CS"/>
</dbReference>
<dbReference type="InterPro" id="IPR009057">
    <property type="entry name" value="Homeodomain-like_sf"/>
</dbReference>
<dbReference type="InterPro" id="IPR046333">
    <property type="entry name" value="HXA10/ABDB-like"/>
</dbReference>
<dbReference type="PANTHER" id="PTHR45874">
    <property type="entry name" value="HOMEOBOX PROTEIN ABDOMINAL-B"/>
    <property type="match status" value="1"/>
</dbReference>
<dbReference type="PANTHER" id="PTHR45874:SF5">
    <property type="entry name" value="HOMEOBOX PROTEIN HOX-D10"/>
    <property type="match status" value="1"/>
</dbReference>
<dbReference type="Pfam" id="PF00046">
    <property type="entry name" value="Homeodomain"/>
    <property type="match status" value="1"/>
</dbReference>
<dbReference type="PRINTS" id="PR00024">
    <property type="entry name" value="HOMEOBOX"/>
</dbReference>
<dbReference type="SMART" id="SM00389">
    <property type="entry name" value="HOX"/>
    <property type="match status" value="1"/>
</dbReference>
<dbReference type="SUPFAM" id="SSF46689">
    <property type="entry name" value="Homeodomain-like"/>
    <property type="match status" value="1"/>
</dbReference>
<dbReference type="PROSITE" id="PS00027">
    <property type="entry name" value="HOMEOBOX_1"/>
    <property type="match status" value="1"/>
</dbReference>
<dbReference type="PROSITE" id="PS50071">
    <property type="entry name" value="HOMEOBOX_2"/>
    <property type="match status" value="1"/>
</dbReference>
<comment type="function">
    <text>Sequence-specific transcription factor which is part of a developmental regulatory system that provides cells with specific positional identities on the anterior-posterior axis.</text>
</comment>
<comment type="interaction">
    <interactant intactId="EBI-445929">
        <id>P28359</id>
    </interactant>
    <interactant intactId="EBI-445922">
        <id>O88513</id>
        <label>Gmnn</label>
    </interactant>
    <organismsDiffer>false</organismsDiffer>
    <experiments>2</experiments>
</comment>
<comment type="interaction">
    <interactant intactId="EBI-445929">
        <id>P28359</id>
    </interactant>
    <interactant intactId="EBI-13635846">
        <id>P70323</id>
        <label>Tbx1</label>
    </interactant>
    <organismsDiffer>false</organismsDiffer>
    <experiments>3</experiments>
</comment>
<comment type="subcellular location">
    <subcellularLocation>
        <location>Nucleus</location>
    </subcellularLocation>
</comment>
<comment type="developmental stage">
    <text evidence="3">Expressed in the developing limb buds. Expressed in the posterior-most regions of the fetus. Strongly expressed in 12.5 day old fetuses in both spinal cord and pre-vertebral column with an anterior boundary of expression lying at the level of the second or third lumbar pre-vertebrae.</text>
</comment>
<comment type="similarity">
    <text evidence="4">Belongs to the Abd-B homeobox family.</text>
</comment>
<protein>
    <recommendedName>
        <fullName>Homeobox protein Hox-D10</fullName>
    </recommendedName>
    <alternativeName>
        <fullName>Homeobox protein Hox-4.5</fullName>
    </alternativeName>
    <alternativeName>
        <fullName>Homeobox protein Hox-5.3</fullName>
    </alternativeName>
</protein>
<reference key="1">
    <citation type="journal article" date="1992" name="EMBO J.">
        <title>Comparison of mouse and human HOX-4 complexes defines conserved sequences involved in the regulation of Hox-4.4.</title>
        <authorList>
            <person name="Renucci A.G.P."/>
            <person name="Zappavigna V."/>
            <person name="Zakany J."/>
            <person name="Izpisua-Belmonte J.-C."/>
            <person name="Buerki K."/>
            <person name="Douboule D."/>
        </authorList>
    </citation>
    <scope>NUCLEOTIDE SEQUENCE [GENOMIC DNA]</scope>
</reference>
<reference key="2">
    <citation type="journal article" date="2004" name="Genome Res.">
        <title>The status, quality, and expansion of the NIH full-length cDNA project: the Mammalian Gene Collection (MGC).</title>
        <authorList>
            <consortium name="The MGC Project Team"/>
        </authorList>
    </citation>
    <scope>NUCLEOTIDE SEQUENCE [LARGE SCALE MRNA]</scope>
    <source>
        <strain>FVB/N</strain>
        <tissue>Kidney</tissue>
        <tissue>Limb</tissue>
    </source>
</reference>
<reference key="3">
    <citation type="journal article" date="1989" name="EMBO J.">
        <title>Two gene members of the murine HOX-5 complex show regional and cell-type specific expression in developing limbs and gonads.</title>
        <authorList>
            <person name="Dolle P."/>
            <person name="Duboule D."/>
        </authorList>
    </citation>
    <scope>NUCLEOTIDE SEQUENCE [GENOMIC DNA] OF 266-325</scope>
</reference>
<reference key="4">
    <citation type="journal article" date="1989" name="EMBO J.">
        <title>The structural and functional organization of the murine HOX gene family resembles that of Drosophila homeotic genes.</title>
        <authorList>
            <person name="Duboule D."/>
            <person name="Dolle P."/>
        </authorList>
    </citation>
    <scope>NUCLEOTIDE SEQUENCE [GENOMIC DNA] OF 266-325</scope>
    <scope>DEVELOPMENTAL STAGE</scope>
</reference>
<reference key="5">
    <citation type="journal article" date="2010" name="Cell">
        <title>A tissue-specific atlas of mouse protein phosphorylation and expression.</title>
        <authorList>
            <person name="Huttlin E.L."/>
            <person name="Jedrychowski M.P."/>
            <person name="Elias J.E."/>
            <person name="Goswami T."/>
            <person name="Rad R."/>
            <person name="Beausoleil S.A."/>
            <person name="Villen J."/>
            <person name="Haas W."/>
            <person name="Sowa M.E."/>
            <person name="Gygi S.P."/>
        </authorList>
    </citation>
    <scope>PHOSPHORYLATION [LARGE SCALE ANALYSIS] AT SER-238 AND SER-239</scope>
    <scope>IDENTIFICATION BY MASS SPECTROMETRY [LARGE SCALE ANALYSIS]</scope>
    <source>
        <tissue>Kidney</tissue>
        <tissue>Testis</tissue>
    </source>
</reference>
<gene>
    <name type="primary">Hoxd10</name>
    <name type="synonym">Hox-4.5</name>
    <name type="synonym">Hoxd-10</name>
</gene>
<evidence type="ECO:0000255" key="1">
    <source>
        <dbReference type="PROSITE-ProRule" id="PRU00108"/>
    </source>
</evidence>
<evidence type="ECO:0000256" key="2">
    <source>
        <dbReference type="SAM" id="MobiDB-lite"/>
    </source>
</evidence>
<evidence type="ECO:0000269" key="3">
    <source>
    </source>
</evidence>
<evidence type="ECO:0000305" key="4"/>
<evidence type="ECO:0007744" key="5">
    <source>
    </source>
</evidence>
<keyword id="KW-0217">Developmental protein</keyword>
<keyword id="KW-0238">DNA-binding</keyword>
<keyword id="KW-0371">Homeobox</keyword>
<keyword id="KW-0539">Nucleus</keyword>
<keyword id="KW-0597">Phosphoprotein</keyword>
<keyword id="KW-1185">Reference proteome</keyword>
<keyword id="KW-0804">Transcription</keyword>
<keyword id="KW-0805">Transcription regulation</keyword>
<feature type="chain" id="PRO_0000200227" description="Homeobox protein Hox-D10">
    <location>
        <begin position="1"/>
        <end position="340"/>
    </location>
</feature>
<feature type="DNA-binding region" description="Homeobox" evidence="1">
    <location>
        <begin position="266"/>
        <end position="325"/>
    </location>
</feature>
<feature type="region of interest" description="Disordered" evidence="2">
    <location>
        <begin position="185"/>
        <end position="268"/>
    </location>
</feature>
<feature type="compositionally biased region" description="Polar residues" evidence="2">
    <location>
        <begin position="203"/>
        <end position="217"/>
    </location>
</feature>
<feature type="compositionally biased region" description="Basic and acidic residues" evidence="2">
    <location>
        <begin position="242"/>
        <end position="253"/>
    </location>
</feature>
<feature type="modified residue" description="Phosphoserine" evidence="5">
    <location>
        <position position="238"/>
    </location>
</feature>
<feature type="modified residue" description="Phosphoserine" evidence="5">
    <location>
        <position position="239"/>
    </location>
</feature>
<feature type="sequence conflict" description="In Ref. 1; CAA44541." evidence="4" ref="1">
    <original>G</original>
    <variation>A</variation>
    <location>
        <position position="184"/>
    </location>
</feature>
<feature type="sequence conflict" description="In Ref. 1; CAA44541." evidence="4" ref="1">
    <original>Q</original>
    <variation>E</variation>
    <location>
        <position position="189"/>
    </location>
</feature>
<feature type="sequence conflict" description="In Ref. 1; CAA44541." evidence="4" ref="1">
    <original>G</original>
    <variation>A</variation>
    <location>
        <position position="207"/>
    </location>
</feature>
<feature type="sequence conflict" description="In Ref. 1, 3 and 4." evidence="4" ref="1 3 4">
    <original>K</original>
    <variation>E</variation>
    <location>
        <position position="268"/>
    </location>
</feature>
<sequence length="340" mass="38328">MSFPNSSPAANTFLVDSLISACRSDSFYSSSASMYMPPPSADMGTYGMQTCGLLPSLAKREVNHQNMGMNVHPYIPQVDSWTDPNRSCRIEQPVTQQVPTCSFTANIKEESNCCMYSDKRNKLISAEVPSYQRLVPESCPVENPEVPVPGYFRLSQTYATGKTQEYNNSPEGSSTVMLQLNPRGAAKPQLSAAQLQMEKKMNESASGQEPTKVSQVESPEAKGGLPEDRSCLAEVSVSSPEVQEKESKEEIKSDTPTSNWLTAKSGRKKRCPYTKHQTLELEKEFLFNMYLTRERRLEISKSVNLTDRQVKIWFQNRRMKLKKMSRENRIRELTANLTFS</sequence>